<sequence>MDTMGRHVISELWGCDFDKLNDIEFIEKTFVDAALKSGAEIREVAFHKFAPQGVSGVVIISESHLTIHTFPEHGYASIDVYTCGHLDPTIAADYIADKLGAQTRETIELPRGMRPIEVKKAQAL</sequence>
<organism>
    <name type="scientific">Geobacillus sp. (strain WCH70)</name>
    <dbReference type="NCBI Taxonomy" id="471223"/>
    <lineage>
        <taxon>Bacteria</taxon>
        <taxon>Bacillati</taxon>
        <taxon>Bacillota</taxon>
        <taxon>Bacilli</taxon>
        <taxon>Bacillales</taxon>
        <taxon>Anoxybacillaceae</taxon>
        <taxon>Geobacillus</taxon>
    </lineage>
</organism>
<dbReference type="EC" id="4.1.1.50" evidence="1"/>
<dbReference type="EMBL" id="CP001638">
    <property type="protein sequence ID" value="ACS25362.1"/>
    <property type="molecule type" value="Genomic_DNA"/>
</dbReference>
<dbReference type="SMR" id="C5D646"/>
<dbReference type="STRING" id="471223.GWCH70_2668"/>
<dbReference type="KEGG" id="gwc:GWCH70_2668"/>
<dbReference type="eggNOG" id="COG1586">
    <property type="taxonomic scope" value="Bacteria"/>
</dbReference>
<dbReference type="HOGENOM" id="CLU_125470_2_3_9"/>
<dbReference type="OrthoDB" id="9793120at2"/>
<dbReference type="UniPathway" id="UPA00331">
    <property type="reaction ID" value="UER00451"/>
</dbReference>
<dbReference type="GO" id="GO:0005829">
    <property type="term" value="C:cytosol"/>
    <property type="evidence" value="ECO:0007669"/>
    <property type="project" value="TreeGrafter"/>
</dbReference>
<dbReference type="GO" id="GO:0004014">
    <property type="term" value="F:adenosylmethionine decarboxylase activity"/>
    <property type="evidence" value="ECO:0007669"/>
    <property type="project" value="UniProtKB-UniRule"/>
</dbReference>
<dbReference type="GO" id="GO:0008295">
    <property type="term" value="P:spermidine biosynthetic process"/>
    <property type="evidence" value="ECO:0007669"/>
    <property type="project" value="UniProtKB-UniRule"/>
</dbReference>
<dbReference type="FunFam" id="3.30.360.110:FF:000001">
    <property type="entry name" value="S-adenosylmethionine decarboxylase proenzyme"/>
    <property type="match status" value="1"/>
</dbReference>
<dbReference type="Gene3D" id="3.30.160.750">
    <property type="match status" value="1"/>
</dbReference>
<dbReference type="Gene3D" id="3.30.360.110">
    <property type="entry name" value="S-adenosylmethionine decarboxylase domain"/>
    <property type="match status" value="1"/>
</dbReference>
<dbReference type="HAMAP" id="MF_00464">
    <property type="entry name" value="AdoMetDC_1"/>
    <property type="match status" value="1"/>
</dbReference>
<dbReference type="InterPro" id="IPR042286">
    <property type="entry name" value="AdoMetDC_C"/>
</dbReference>
<dbReference type="InterPro" id="IPR003826">
    <property type="entry name" value="AdoMetDC_fam_prok"/>
</dbReference>
<dbReference type="InterPro" id="IPR042284">
    <property type="entry name" value="AdoMetDC_N"/>
</dbReference>
<dbReference type="InterPro" id="IPR016067">
    <property type="entry name" value="S-AdoMet_deCO2ase_core"/>
</dbReference>
<dbReference type="InterPro" id="IPR017716">
    <property type="entry name" value="S-AdoMet_deCOase_pro-enz"/>
</dbReference>
<dbReference type="NCBIfam" id="TIGR03330">
    <property type="entry name" value="SAM_DCase_Bsu"/>
    <property type="match status" value="1"/>
</dbReference>
<dbReference type="PANTHER" id="PTHR33866">
    <property type="entry name" value="S-ADENOSYLMETHIONINE DECARBOXYLASE PROENZYME"/>
    <property type="match status" value="1"/>
</dbReference>
<dbReference type="PANTHER" id="PTHR33866:SF2">
    <property type="entry name" value="S-ADENOSYLMETHIONINE DECARBOXYLASE PROENZYME"/>
    <property type="match status" value="1"/>
</dbReference>
<dbReference type="Pfam" id="PF02675">
    <property type="entry name" value="AdoMet_dc"/>
    <property type="match status" value="1"/>
</dbReference>
<dbReference type="SUPFAM" id="SSF56276">
    <property type="entry name" value="S-adenosylmethionine decarboxylase"/>
    <property type="match status" value="1"/>
</dbReference>
<keyword id="KW-0068">Autocatalytic cleavage</keyword>
<keyword id="KW-0210">Decarboxylase</keyword>
<keyword id="KW-0456">Lyase</keyword>
<keyword id="KW-0620">Polyamine biosynthesis</keyword>
<keyword id="KW-0670">Pyruvate</keyword>
<keyword id="KW-0949">S-adenosyl-L-methionine</keyword>
<keyword id="KW-0704">Schiff base</keyword>
<keyword id="KW-0745">Spermidine biosynthesis</keyword>
<keyword id="KW-0865">Zymogen</keyword>
<feature type="chain" id="PRO_1000206306" description="S-adenosylmethionine decarboxylase beta chain" evidence="1">
    <location>
        <begin position="1"/>
        <end position="62"/>
    </location>
</feature>
<feature type="chain" id="PRO_1000206307" description="S-adenosylmethionine decarboxylase alpha chain" evidence="1">
    <location>
        <begin position="63"/>
        <end position="124"/>
    </location>
</feature>
<feature type="active site" description="Schiff-base intermediate with substrate; via pyruvic acid" evidence="1">
    <location>
        <position position="63"/>
    </location>
</feature>
<feature type="active site" description="Proton acceptor; for processing activity" evidence="1">
    <location>
        <position position="68"/>
    </location>
</feature>
<feature type="active site" description="Proton donor; for catalytic activity" evidence="1">
    <location>
        <position position="83"/>
    </location>
</feature>
<feature type="site" description="Cleavage (non-hydrolytic); by autolysis" evidence="1">
    <location>
        <begin position="62"/>
        <end position="63"/>
    </location>
</feature>
<feature type="modified residue" description="Pyruvic acid (Ser); by autocatalysis" evidence="1">
    <location>
        <position position="63"/>
    </location>
</feature>
<reference key="1">
    <citation type="submission" date="2009-06" db="EMBL/GenBank/DDBJ databases">
        <title>Complete sequence of chromosome of Geopacillus sp. WCH70.</title>
        <authorList>
            <consortium name="US DOE Joint Genome Institute"/>
            <person name="Lucas S."/>
            <person name="Copeland A."/>
            <person name="Lapidus A."/>
            <person name="Glavina del Rio T."/>
            <person name="Dalin E."/>
            <person name="Tice H."/>
            <person name="Bruce D."/>
            <person name="Goodwin L."/>
            <person name="Pitluck S."/>
            <person name="Chertkov O."/>
            <person name="Brettin T."/>
            <person name="Detter J.C."/>
            <person name="Han C."/>
            <person name="Larimer F."/>
            <person name="Land M."/>
            <person name="Hauser L."/>
            <person name="Kyrpides N."/>
            <person name="Mikhailova N."/>
            <person name="Brumm P."/>
            <person name="Mead D.A."/>
            <person name="Richardson P."/>
        </authorList>
    </citation>
    <scope>NUCLEOTIDE SEQUENCE [LARGE SCALE GENOMIC DNA]</scope>
    <source>
        <strain>WCH70</strain>
    </source>
</reference>
<protein>
    <recommendedName>
        <fullName evidence="1">S-adenosylmethionine decarboxylase proenzyme</fullName>
        <shortName evidence="1">AdoMetDC</shortName>
        <shortName evidence="1">SAMDC</shortName>
        <ecNumber evidence="1">4.1.1.50</ecNumber>
    </recommendedName>
    <component>
        <recommendedName>
            <fullName evidence="1">S-adenosylmethionine decarboxylase beta chain</fullName>
        </recommendedName>
    </component>
    <component>
        <recommendedName>
            <fullName evidence="1">S-adenosylmethionine decarboxylase alpha chain</fullName>
        </recommendedName>
    </component>
</protein>
<gene>
    <name evidence="1" type="primary">speH</name>
    <name type="ordered locus">GWCH70_2668</name>
</gene>
<proteinExistence type="inferred from homology"/>
<name>SPEH_GEOSW</name>
<comment type="function">
    <text evidence="1">Catalyzes the decarboxylation of S-adenosylmethionine to S-adenosylmethioninamine (dcAdoMet), the propylamine donor required for the synthesis of the polyamines spermine and spermidine from the diamine putrescine.</text>
</comment>
<comment type="catalytic activity">
    <reaction evidence="1">
        <text>S-adenosyl-L-methionine + H(+) = S-adenosyl 3-(methylsulfanyl)propylamine + CO2</text>
        <dbReference type="Rhea" id="RHEA:15981"/>
        <dbReference type="ChEBI" id="CHEBI:15378"/>
        <dbReference type="ChEBI" id="CHEBI:16526"/>
        <dbReference type="ChEBI" id="CHEBI:57443"/>
        <dbReference type="ChEBI" id="CHEBI:59789"/>
        <dbReference type="EC" id="4.1.1.50"/>
    </reaction>
</comment>
<comment type="cofactor">
    <cofactor evidence="1">
        <name>pyruvate</name>
        <dbReference type="ChEBI" id="CHEBI:15361"/>
    </cofactor>
    <text evidence="1">Binds 1 pyruvoyl group covalently per subunit.</text>
</comment>
<comment type="pathway">
    <text evidence="1">Amine and polyamine biosynthesis; S-adenosylmethioninamine biosynthesis; S-adenosylmethioninamine from S-adenosyl-L-methionine: step 1/1.</text>
</comment>
<comment type="subunit">
    <text evidence="1">Heterotetramer of two alpha and two beta chains arranged as a dimer of alpha/beta heterodimers.</text>
</comment>
<comment type="PTM">
    <text evidence="1">Is synthesized initially as an inactive proenzyme. Formation of the active enzyme involves a self-maturation process in which the active site pyruvoyl group is generated from an internal serine residue via an autocatalytic post-translational modification. Two non-identical subunits are generated from the proenzyme in this reaction, and the pyruvate is formed at the N-terminus of the alpha chain, which is derived from the carboxyl end of the proenzyme. The post-translation cleavage follows an unusual pathway, termed non-hydrolytic serinolysis, in which the side chain hydroxyl group of the serine supplies its oxygen atom to form the C-terminus of the beta chain, while the remainder of the serine residue undergoes an oxidative deamination to produce ammonia and the pyruvoyl group blocking the N-terminus of the alpha chain.</text>
</comment>
<comment type="similarity">
    <text evidence="1">Belongs to the prokaryotic AdoMetDC family. Type 1 subfamily.</text>
</comment>
<accession>C5D646</accession>
<evidence type="ECO:0000255" key="1">
    <source>
        <dbReference type="HAMAP-Rule" id="MF_00464"/>
    </source>
</evidence>